<keyword id="KW-0963">Cytoplasm</keyword>
<keyword id="KW-1185">Reference proteome</keyword>
<keyword id="KW-0690">Ribosome biogenesis</keyword>
<proteinExistence type="inferred from homology"/>
<dbReference type="EMBL" id="BX571662">
    <property type="protein sequence ID" value="CAE11019.1"/>
    <property type="molecule type" value="Genomic_DNA"/>
</dbReference>
<dbReference type="RefSeq" id="WP_011139801.1">
    <property type="nucleotide sequence ID" value="NC_005090.1"/>
</dbReference>
<dbReference type="SMR" id="Q7MQU1"/>
<dbReference type="STRING" id="273121.WS2017"/>
<dbReference type="KEGG" id="wsu:WS2017"/>
<dbReference type="eggNOG" id="COG0858">
    <property type="taxonomic scope" value="Bacteria"/>
</dbReference>
<dbReference type="HOGENOM" id="CLU_089475_6_5_7"/>
<dbReference type="Proteomes" id="UP000000422">
    <property type="component" value="Chromosome"/>
</dbReference>
<dbReference type="GO" id="GO:0005737">
    <property type="term" value="C:cytoplasm"/>
    <property type="evidence" value="ECO:0007669"/>
    <property type="project" value="UniProtKB-SubCell"/>
</dbReference>
<dbReference type="GO" id="GO:0030490">
    <property type="term" value="P:maturation of SSU-rRNA"/>
    <property type="evidence" value="ECO:0007669"/>
    <property type="project" value="UniProtKB-UniRule"/>
</dbReference>
<dbReference type="Gene3D" id="3.30.300.20">
    <property type="match status" value="1"/>
</dbReference>
<dbReference type="HAMAP" id="MF_00003">
    <property type="entry name" value="RbfA"/>
    <property type="match status" value="1"/>
</dbReference>
<dbReference type="InterPro" id="IPR015946">
    <property type="entry name" value="KH_dom-like_a/b"/>
</dbReference>
<dbReference type="InterPro" id="IPR000238">
    <property type="entry name" value="RbfA"/>
</dbReference>
<dbReference type="InterPro" id="IPR023799">
    <property type="entry name" value="RbfA_dom_sf"/>
</dbReference>
<dbReference type="InterPro" id="IPR020053">
    <property type="entry name" value="Ribosome-bd_factorA_CS"/>
</dbReference>
<dbReference type="NCBIfam" id="NF001806">
    <property type="entry name" value="PRK00521.3-4"/>
    <property type="match status" value="1"/>
</dbReference>
<dbReference type="NCBIfam" id="TIGR00082">
    <property type="entry name" value="rbfA"/>
    <property type="match status" value="1"/>
</dbReference>
<dbReference type="Pfam" id="PF02033">
    <property type="entry name" value="RBFA"/>
    <property type="match status" value="1"/>
</dbReference>
<dbReference type="SUPFAM" id="SSF89919">
    <property type="entry name" value="Ribosome-binding factor A, RbfA"/>
    <property type="match status" value="1"/>
</dbReference>
<dbReference type="PROSITE" id="PS01319">
    <property type="entry name" value="RBFA"/>
    <property type="match status" value="1"/>
</dbReference>
<gene>
    <name evidence="1" type="primary">rbfA</name>
    <name type="ordered locus">WS2017</name>
</gene>
<name>RBFA_WOLSU</name>
<reference key="1">
    <citation type="journal article" date="2003" name="Proc. Natl. Acad. Sci. U.S.A.">
        <title>Complete genome sequence and analysis of Wolinella succinogenes.</title>
        <authorList>
            <person name="Baar C."/>
            <person name="Eppinger M."/>
            <person name="Raddatz G."/>
            <person name="Simon J."/>
            <person name="Lanz C."/>
            <person name="Klimmek O."/>
            <person name="Nandakumar R."/>
            <person name="Gross R."/>
            <person name="Rosinus A."/>
            <person name="Keller H."/>
            <person name="Jagtap P."/>
            <person name="Linke B."/>
            <person name="Meyer F."/>
            <person name="Lederer H."/>
            <person name="Schuster S.C."/>
        </authorList>
    </citation>
    <scope>NUCLEOTIDE SEQUENCE [LARGE SCALE GENOMIC DNA]</scope>
    <source>
        <strain>ATCC 29543 / DSM 1740 / CCUG 13145 / JCM 31913 / LMG 7466 / NCTC 11488 / FDC 602W</strain>
    </source>
</reference>
<comment type="function">
    <text evidence="1">One of several proteins that assist in the late maturation steps of the functional core of the 30S ribosomal subunit. Associates with free 30S ribosomal subunits (but not with 30S subunits that are part of 70S ribosomes or polysomes). Required for efficient processing of 16S rRNA. May interact with the 5'-terminal helix region of 16S rRNA.</text>
</comment>
<comment type="subunit">
    <text evidence="1">Monomer. Binds 30S ribosomal subunits, but not 50S ribosomal subunits or 70S ribosomes.</text>
</comment>
<comment type="subcellular location">
    <subcellularLocation>
        <location evidence="1">Cytoplasm</location>
    </subcellularLocation>
</comment>
<comment type="similarity">
    <text evidence="1">Belongs to the RbfA family.</text>
</comment>
<accession>Q7MQU1</accession>
<evidence type="ECO:0000255" key="1">
    <source>
        <dbReference type="HAMAP-Rule" id="MF_00003"/>
    </source>
</evidence>
<organism>
    <name type="scientific">Wolinella succinogenes (strain ATCC 29543 / DSM 1740 / CCUG 13145 / JCM 31913 / LMG 7466 / NCTC 11488 / FDC 602W)</name>
    <name type="common">Vibrio succinogenes</name>
    <dbReference type="NCBI Taxonomy" id="273121"/>
    <lineage>
        <taxon>Bacteria</taxon>
        <taxon>Pseudomonadati</taxon>
        <taxon>Campylobacterota</taxon>
        <taxon>Epsilonproteobacteria</taxon>
        <taxon>Campylobacterales</taxon>
        <taxon>Helicobacteraceae</taxon>
        <taxon>Wolinella</taxon>
    </lineage>
</organism>
<protein>
    <recommendedName>
        <fullName evidence="1">Ribosome-binding factor A</fullName>
    </recommendedName>
</protein>
<feature type="chain" id="PRO_0000102771" description="Ribosome-binding factor A">
    <location>
        <begin position="1"/>
        <end position="119"/>
    </location>
</feature>
<sequence length="119" mass="13716">MKEKSVKLQRTESLLKEVIPEALSTLSDTRLNSLGVVEVDCSKGKYHAEVYLDAPFATPEEKREILRQLRLAEGTIRDHCLSATGWFKCPRFHFNFDDSTDKANRLDAIFEQLKKERES</sequence>